<proteinExistence type="inferred from homology"/>
<protein>
    <recommendedName>
        <fullName evidence="1">Protein SlyX homolog</fullName>
    </recommendedName>
</protein>
<reference key="1">
    <citation type="journal article" date="2010" name="PLoS ONE">
        <title>The complete multipartite genome sequence of Cupriavidus necator JMP134, a versatile pollutant degrader.</title>
        <authorList>
            <person name="Lykidis A."/>
            <person name="Perez-Pantoja D."/>
            <person name="Ledger T."/>
            <person name="Mavromatis K."/>
            <person name="Anderson I.J."/>
            <person name="Ivanova N.N."/>
            <person name="Hooper S.D."/>
            <person name="Lapidus A."/>
            <person name="Lucas S."/>
            <person name="Gonzalez B."/>
            <person name="Kyrpides N.C."/>
        </authorList>
    </citation>
    <scope>NUCLEOTIDE SEQUENCE [LARGE SCALE GENOMIC DNA]</scope>
    <source>
        <strain>JMP134 / LMG 1197</strain>
    </source>
</reference>
<dbReference type="EMBL" id="CP000091">
    <property type="protein sequence ID" value="AAZ64594.1"/>
    <property type="molecule type" value="Genomic_DNA"/>
</dbReference>
<dbReference type="SMR" id="Q46QJ0"/>
<dbReference type="STRING" id="264198.Reut_B5248"/>
<dbReference type="KEGG" id="reu:Reut_B5248"/>
<dbReference type="eggNOG" id="COG2900">
    <property type="taxonomic scope" value="Bacteria"/>
</dbReference>
<dbReference type="HOGENOM" id="CLU_180796_3_1_4"/>
<dbReference type="Gene3D" id="1.20.5.300">
    <property type="match status" value="1"/>
</dbReference>
<dbReference type="HAMAP" id="MF_00715">
    <property type="entry name" value="SlyX"/>
    <property type="match status" value="1"/>
</dbReference>
<dbReference type="InterPro" id="IPR007236">
    <property type="entry name" value="SlyX"/>
</dbReference>
<dbReference type="NCBIfam" id="NF003316">
    <property type="entry name" value="PRK04325.1"/>
    <property type="match status" value="1"/>
</dbReference>
<dbReference type="PANTHER" id="PTHR36508">
    <property type="entry name" value="PROTEIN SLYX"/>
    <property type="match status" value="1"/>
</dbReference>
<dbReference type="PANTHER" id="PTHR36508:SF1">
    <property type="entry name" value="PROTEIN SLYX"/>
    <property type="match status" value="1"/>
</dbReference>
<dbReference type="Pfam" id="PF04102">
    <property type="entry name" value="SlyX"/>
    <property type="match status" value="1"/>
</dbReference>
<sequence length="67" mass="7779">MDDRLNELEIKLAFQEDLLETLNLTVARQQQQLDLLQEQFRALYQQVTSAPSTAAESNPQHEIPPHY</sequence>
<comment type="similarity">
    <text evidence="1">Belongs to the SlyX family.</text>
</comment>
<organism>
    <name type="scientific">Cupriavidus pinatubonensis (strain JMP 134 / LMG 1197)</name>
    <name type="common">Cupriavidus necator (strain JMP 134)</name>
    <dbReference type="NCBI Taxonomy" id="264198"/>
    <lineage>
        <taxon>Bacteria</taxon>
        <taxon>Pseudomonadati</taxon>
        <taxon>Pseudomonadota</taxon>
        <taxon>Betaproteobacteria</taxon>
        <taxon>Burkholderiales</taxon>
        <taxon>Burkholderiaceae</taxon>
        <taxon>Cupriavidus</taxon>
    </lineage>
</organism>
<accession>Q46QJ0</accession>
<gene>
    <name evidence="1" type="primary">slyX</name>
    <name type="ordered locus">Reut_B5248</name>
</gene>
<evidence type="ECO:0000255" key="1">
    <source>
        <dbReference type="HAMAP-Rule" id="MF_00715"/>
    </source>
</evidence>
<evidence type="ECO:0000256" key="2">
    <source>
        <dbReference type="SAM" id="MobiDB-lite"/>
    </source>
</evidence>
<feature type="chain" id="PRO_0000227078" description="Protein SlyX homolog">
    <location>
        <begin position="1"/>
        <end position="67"/>
    </location>
</feature>
<feature type="region of interest" description="Disordered" evidence="2">
    <location>
        <begin position="48"/>
        <end position="67"/>
    </location>
</feature>
<feature type="compositionally biased region" description="Polar residues" evidence="2">
    <location>
        <begin position="48"/>
        <end position="60"/>
    </location>
</feature>
<name>SLYX_CUPPJ</name>